<accession>Q7VFP7</accession>
<dbReference type="EC" id="2.3.1.269" evidence="1"/>
<dbReference type="EMBL" id="AE017125">
    <property type="protein sequence ID" value="AAP78225.1"/>
    <property type="molecule type" value="Genomic_DNA"/>
</dbReference>
<dbReference type="SMR" id="Q7VFP7"/>
<dbReference type="STRING" id="235279.HH_1628"/>
<dbReference type="KEGG" id="hhe:HH_1628"/>
<dbReference type="eggNOG" id="COG0815">
    <property type="taxonomic scope" value="Bacteria"/>
</dbReference>
<dbReference type="HOGENOM" id="CLU_050649_0_0_7"/>
<dbReference type="UniPathway" id="UPA00666"/>
<dbReference type="Proteomes" id="UP000002495">
    <property type="component" value="Chromosome"/>
</dbReference>
<dbReference type="GO" id="GO:0005886">
    <property type="term" value="C:plasma membrane"/>
    <property type="evidence" value="ECO:0007669"/>
    <property type="project" value="UniProtKB-SubCell"/>
</dbReference>
<dbReference type="GO" id="GO:0016410">
    <property type="term" value="F:N-acyltransferase activity"/>
    <property type="evidence" value="ECO:0007669"/>
    <property type="project" value="UniProtKB-UniRule"/>
</dbReference>
<dbReference type="GO" id="GO:0042158">
    <property type="term" value="P:lipoprotein biosynthetic process"/>
    <property type="evidence" value="ECO:0007669"/>
    <property type="project" value="UniProtKB-UniRule"/>
</dbReference>
<dbReference type="Gene3D" id="3.60.110.10">
    <property type="entry name" value="Carbon-nitrogen hydrolase"/>
    <property type="match status" value="1"/>
</dbReference>
<dbReference type="HAMAP" id="MF_01148">
    <property type="entry name" value="Lnt"/>
    <property type="match status" value="1"/>
</dbReference>
<dbReference type="InterPro" id="IPR004563">
    <property type="entry name" value="Apolipo_AcylTrfase"/>
</dbReference>
<dbReference type="InterPro" id="IPR003010">
    <property type="entry name" value="C-N_Hydrolase"/>
</dbReference>
<dbReference type="InterPro" id="IPR036526">
    <property type="entry name" value="C-N_Hydrolase_sf"/>
</dbReference>
<dbReference type="NCBIfam" id="TIGR00546">
    <property type="entry name" value="lnt"/>
    <property type="match status" value="1"/>
</dbReference>
<dbReference type="NCBIfam" id="NF008934">
    <property type="entry name" value="PRK12291.1"/>
    <property type="match status" value="1"/>
</dbReference>
<dbReference type="PANTHER" id="PTHR38686">
    <property type="entry name" value="APOLIPOPROTEIN N-ACYLTRANSFERASE"/>
    <property type="match status" value="1"/>
</dbReference>
<dbReference type="PANTHER" id="PTHR38686:SF1">
    <property type="entry name" value="APOLIPOPROTEIN N-ACYLTRANSFERASE"/>
    <property type="match status" value="1"/>
</dbReference>
<dbReference type="Pfam" id="PF00795">
    <property type="entry name" value="CN_hydrolase"/>
    <property type="match status" value="1"/>
</dbReference>
<dbReference type="SUPFAM" id="SSF56317">
    <property type="entry name" value="Carbon-nitrogen hydrolase"/>
    <property type="match status" value="1"/>
</dbReference>
<dbReference type="PROSITE" id="PS50263">
    <property type="entry name" value="CN_HYDROLASE"/>
    <property type="match status" value="1"/>
</dbReference>
<gene>
    <name evidence="1" type="primary">lnt</name>
    <name type="ordered locus">HH_1628</name>
</gene>
<reference key="1">
    <citation type="journal article" date="2003" name="Proc. Natl. Acad. Sci. U.S.A.">
        <title>The complete genome sequence of the carcinogenic bacterium Helicobacter hepaticus.</title>
        <authorList>
            <person name="Suerbaum S."/>
            <person name="Josenhans C."/>
            <person name="Sterzenbach T."/>
            <person name="Drescher B."/>
            <person name="Brandt P."/>
            <person name="Bell M."/>
            <person name="Droege M."/>
            <person name="Fartmann B."/>
            <person name="Fischer H.-P."/>
            <person name="Ge Z."/>
            <person name="Hoerster A."/>
            <person name="Holland R."/>
            <person name="Klein K."/>
            <person name="Koenig J."/>
            <person name="Macko L."/>
            <person name="Mendz G.L."/>
            <person name="Nyakatura G."/>
            <person name="Schauer D.B."/>
            <person name="Shen Z."/>
            <person name="Weber J."/>
            <person name="Frosch M."/>
            <person name="Fox J.G."/>
        </authorList>
    </citation>
    <scope>NUCLEOTIDE SEQUENCE [LARGE SCALE GENOMIC DNA]</scope>
    <source>
        <strain>ATCC 51449 / 3B1</strain>
    </source>
</reference>
<proteinExistence type="inferred from homology"/>
<sequence>MLPFYAQWVLESYDKAISPLLVSLLGLFSIASVLFVPKNRRFGVGFFIGMLWFYWISLGLRYFDMSFLIPLVVIACGIFMGFVFYIGLWCECLIVRFAFLLLLSYLTPFGFDWIVPESVFAYSYIGVDKLSFALSILALWILFKYKTWWKLGGVICLVFALDFGLKDSKIQNLPPLKIKLAQSAVSQDFDYRMREAKSIFSEHISDIQKAINEEYDVIILPESAFYVPLDSQYFPYFDSLLEMSHKIVIIVGALREEIHTDGRASYFNSTYKFDKGKVSFYDKVHLVPFGETLPSFLLPLVNTFFQGIGGFSAGKDFGYFDIAEIKFKNAICYEGSNRGFYADYPQYVIVTSNNAWFVPSIEPILQKNLMKYYARLYGSVIFHATNLSPAAIITPFVSSR</sequence>
<organism>
    <name type="scientific">Helicobacter hepaticus (strain ATCC 51449 / 3B1)</name>
    <dbReference type="NCBI Taxonomy" id="235279"/>
    <lineage>
        <taxon>Bacteria</taxon>
        <taxon>Pseudomonadati</taxon>
        <taxon>Campylobacterota</taxon>
        <taxon>Epsilonproteobacteria</taxon>
        <taxon>Campylobacterales</taxon>
        <taxon>Helicobacteraceae</taxon>
        <taxon>Helicobacter</taxon>
    </lineage>
</organism>
<feature type="chain" id="PRO_0000178069" description="Apolipoprotein N-acyltransferase">
    <location>
        <begin position="1"/>
        <end position="400"/>
    </location>
</feature>
<feature type="transmembrane region" description="Helical" evidence="1">
    <location>
        <begin position="16"/>
        <end position="36"/>
    </location>
</feature>
<feature type="transmembrane region" description="Helical" evidence="1">
    <location>
        <begin position="42"/>
        <end position="62"/>
    </location>
</feature>
<feature type="transmembrane region" description="Helical" evidence="1">
    <location>
        <begin position="67"/>
        <end position="87"/>
    </location>
</feature>
<feature type="transmembrane region" description="Helical" evidence="1">
    <location>
        <begin position="97"/>
        <end position="117"/>
    </location>
</feature>
<feature type="transmembrane region" description="Helical" evidence="1">
    <location>
        <begin position="123"/>
        <end position="143"/>
    </location>
</feature>
<feature type="transmembrane region" description="Helical" evidence="1">
    <location>
        <begin position="377"/>
        <end position="397"/>
    </location>
</feature>
<feature type="domain" description="CN hydrolase" evidence="1">
    <location>
        <begin position="181"/>
        <end position="400"/>
    </location>
</feature>
<feature type="active site" description="Proton acceptor" evidence="1">
    <location>
        <position position="222"/>
    </location>
</feature>
<feature type="active site" evidence="1">
    <location>
        <position position="283"/>
    </location>
</feature>
<feature type="active site" description="Nucleophile" evidence="1">
    <location>
        <position position="332"/>
    </location>
</feature>
<comment type="function">
    <text evidence="1">Catalyzes the phospholipid dependent N-acylation of the N-terminal cysteine of apolipoprotein, the last step in lipoprotein maturation.</text>
</comment>
<comment type="catalytic activity">
    <reaction evidence="1">
        <text>N-terminal S-1,2-diacyl-sn-glyceryl-L-cysteinyl-[lipoprotein] + a glycerophospholipid = N-acyl-S-1,2-diacyl-sn-glyceryl-L-cysteinyl-[lipoprotein] + a 2-acyl-sn-glycero-3-phospholipid + H(+)</text>
        <dbReference type="Rhea" id="RHEA:48228"/>
        <dbReference type="Rhea" id="RHEA-COMP:14681"/>
        <dbReference type="Rhea" id="RHEA-COMP:14684"/>
        <dbReference type="ChEBI" id="CHEBI:15378"/>
        <dbReference type="ChEBI" id="CHEBI:136912"/>
        <dbReference type="ChEBI" id="CHEBI:140656"/>
        <dbReference type="ChEBI" id="CHEBI:140657"/>
        <dbReference type="ChEBI" id="CHEBI:140660"/>
        <dbReference type="EC" id="2.3.1.269"/>
    </reaction>
</comment>
<comment type="pathway">
    <text evidence="1">Protein modification; lipoprotein biosynthesis (N-acyl transfer).</text>
</comment>
<comment type="subcellular location">
    <subcellularLocation>
        <location evidence="1">Cell inner membrane</location>
        <topology evidence="1">Multi-pass membrane protein</topology>
    </subcellularLocation>
</comment>
<comment type="similarity">
    <text evidence="1">Belongs to the CN hydrolase family. Apolipoprotein N-acyltransferase subfamily.</text>
</comment>
<protein>
    <recommendedName>
        <fullName evidence="1">Apolipoprotein N-acyltransferase</fullName>
        <shortName evidence="1">ALP N-acyltransferase</shortName>
        <ecNumber evidence="1">2.3.1.269</ecNumber>
    </recommendedName>
</protein>
<name>LNT_HELHP</name>
<keyword id="KW-0012">Acyltransferase</keyword>
<keyword id="KW-0997">Cell inner membrane</keyword>
<keyword id="KW-1003">Cell membrane</keyword>
<keyword id="KW-0472">Membrane</keyword>
<keyword id="KW-1185">Reference proteome</keyword>
<keyword id="KW-0808">Transferase</keyword>
<keyword id="KW-0812">Transmembrane</keyword>
<keyword id="KW-1133">Transmembrane helix</keyword>
<evidence type="ECO:0000255" key="1">
    <source>
        <dbReference type="HAMAP-Rule" id="MF_01148"/>
    </source>
</evidence>